<feature type="chain" id="PRO_0000196463" description="DNA replication and repair protein RecF">
    <location>
        <begin position="1"/>
        <end position="371"/>
    </location>
</feature>
<feature type="binding site" evidence="1">
    <location>
        <begin position="30"/>
        <end position="37"/>
    </location>
    <ligand>
        <name>ATP</name>
        <dbReference type="ChEBI" id="CHEBI:30616"/>
    </ligand>
</feature>
<evidence type="ECO:0000255" key="1">
    <source>
        <dbReference type="HAMAP-Rule" id="MF_00365"/>
    </source>
</evidence>
<comment type="function">
    <text evidence="1">The RecF protein is involved in DNA metabolism; it is required for DNA replication and normal SOS inducibility. RecF binds preferentially to single-stranded, linear DNA. It also seems to bind ATP.</text>
</comment>
<comment type="subcellular location">
    <subcellularLocation>
        <location evidence="1">Cytoplasm</location>
    </subcellularLocation>
</comment>
<comment type="similarity">
    <text evidence="1">Belongs to the RecF family.</text>
</comment>
<keyword id="KW-0067">ATP-binding</keyword>
<keyword id="KW-0963">Cytoplasm</keyword>
<keyword id="KW-0227">DNA damage</keyword>
<keyword id="KW-0234">DNA repair</keyword>
<keyword id="KW-0235">DNA replication</keyword>
<keyword id="KW-0238">DNA-binding</keyword>
<keyword id="KW-0547">Nucleotide-binding</keyword>
<keyword id="KW-0742">SOS response</keyword>
<name>RECF_STAES</name>
<proteinExistence type="inferred from homology"/>
<sequence length="371" mass="42608">MKLNTLQLENYRNYEQVTLDCHPEVNILIGENAQGKTNLLESIYTLALAKSHRTSNDKELIRFKSDYAKIEGELSYRHGTMPLTMFITKKGKQVKVNHLEQSRLTQYIGHLNVVLFAPEDLNIVKGSPQIRRRFIDMELGQISAVYLNDLAQYQRILKQKNNYLKQLQIGQKTDTTMLEVLNQQFVEYALKVTLRREHFIKELETLAQPIHAGITNDQETLTLDYVPSLKLSNYEANQSELIEEVLALLNDNLQREKERGVCLYGPHRDDLSFNVNGMDAQTYGSQGQQRTTALSIKLAEIELMNIEVGEYPILLLDDVLSELDDSRQTHLLSTIQHKVQTFVTTTSVEGIDHEIMNNAKLYRISQGEILK</sequence>
<reference key="1">
    <citation type="journal article" date="2003" name="Mol. Microbiol.">
        <title>Genome-based analysis of virulence genes in a non-biofilm-forming Staphylococcus epidermidis strain (ATCC 12228).</title>
        <authorList>
            <person name="Zhang Y.-Q."/>
            <person name="Ren S.-X."/>
            <person name="Li H.-L."/>
            <person name="Wang Y.-X."/>
            <person name="Fu G."/>
            <person name="Yang J."/>
            <person name="Qin Z.-Q."/>
            <person name="Miao Y.-G."/>
            <person name="Wang W.-Y."/>
            <person name="Chen R.-S."/>
            <person name="Shen Y."/>
            <person name="Chen Z."/>
            <person name="Yuan Z.-H."/>
            <person name="Zhao G.-P."/>
            <person name="Qu D."/>
            <person name="Danchin A."/>
            <person name="Wen Y.-M."/>
        </authorList>
    </citation>
    <scope>NUCLEOTIDE SEQUENCE [LARGE SCALE GENOMIC DNA]</scope>
    <source>
        <strain>ATCC 12228 / FDA PCI 1200</strain>
    </source>
</reference>
<dbReference type="EMBL" id="AE015929">
    <property type="protein sequence ID" value="AAO03600.1"/>
    <property type="molecule type" value="Genomic_DNA"/>
</dbReference>
<dbReference type="RefSeq" id="NP_763558.1">
    <property type="nucleotide sequence ID" value="NC_004461.1"/>
</dbReference>
<dbReference type="RefSeq" id="WP_001831795.1">
    <property type="nucleotide sequence ID" value="NZ_WBME01000012.1"/>
</dbReference>
<dbReference type="SMR" id="Q8CQK5"/>
<dbReference type="KEGG" id="sep:SE_0003"/>
<dbReference type="PATRIC" id="fig|176280.10.peg.4"/>
<dbReference type="eggNOG" id="COG1195">
    <property type="taxonomic scope" value="Bacteria"/>
</dbReference>
<dbReference type="HOGENOM" id="CLU_040267_0_1_9"/>
<dbReference type="OrthoDB" id="9803889at2"/>
<dbReference type="Proteomes" id="UP000001411">
    <property type="component" value="Chromosome"/>
</dbReference>
<dbReference type="GO" id="GO:0005737">
    <property type="term" value="C:cytoplasm"/>
    <property type="evidence" value="ECO:0007669"/>
    <property type="project" value="UniProtKB-SubCell"/>
</dbReference>
<dbReference type="GO" id="GO:0005524">
    <property type="term" value="F:ATP binding"/>
    <property type="evidence" value="ECO:0007669"/>
    <property type="project" value="UniProtKB-UniRule"/>
</dbReference>
<dbReference type="GO" id="GO:0003697">
    <property type="term" value="F:single-stranded DNA binding"/>
    <property type="evidence" value="ECO:0007669"/>
    <property type="project" value="UniProtKB-UniRule"/>
</dbReference>
<dbReference type="GO" id="GO:0006260">
    <property type="term" value="P:DNA replication"/>
    <property type="evidence" value="ECO:0007669"/>
    <property type="project" value="UniProtKB-UniRule"/>
</dbReference>
<dbReference type="GO" id="GO:0000731">
    <property type="term" value="P:DNA synthesis involved in DNA repair"/>
    <property type="evidence" value="ECO:0007669"/>
    <property type="project" value="TreeGrafter"/>
</dbReference>
<dbReference type="GO" id="GO:0006302">
    <property type="term" value="P:double-strand break repair"/>
    <property type="evidence" value="ECO:0007669"/>
    <property type="project" value="TreeGrafter"/>
</dbReference>
<dbReference type="GO" id="GO:0009432">
    <property type="term" value="P:SOS response"/>
    <property type="evidence" value="ECO:0007669"/>
    <property type="project" value="UniProtKB-UniRule"/>
</dbReference>
<dbReference type="CDD" id="cd03242">
    <property type="entry name" value="ABC_RecF"/>
    <property type="match status" value="1"/>
</dbReference>
<dbReference type="FunFam" id="1.20.1050.90:FF:000002">
    <property type="entry name" value="DNA replication and repair protein RecF"/>
    <property type="match status" value="1"/>
</dbReference>
<dbReference type="Gene3D" id="3.40.50.300">
    <property type="entry name" value="P-loop containing nucleotide triphosphate hydrolases"/>
    <property type="match status" value="1"/>
</dbReference>
<dbReference type="Gene3D" id="1.20.1050.90">
    <property type="entry name" value="RecF/RecN/SMC, N-terminal domain"/>
    <property type="match status" value="1"/>
</dbReference>
<dbReference type="HAMAP" id="MF_00365">
    <property type="entry name" value="RecF"/>
    <property type="match status" value="1"/>
</dbReference>
<dbReference type="InterPro" id="IPR001238">
    <property type="entry name" value="DNA-binding_RecF"/>
</dbReference>
<dbReference type="InterPro" id="IPR018078">
    <property type="entry name" value="DNA-binding_RecF_CS"/>
</dbReference>
<dbReference type="InterPro" id="IPR027417">
    <property type="entry name" value="P-loop_NTPase"/>
</dbReference>
<dbReference type="InterPro" id="IPR003395">
    <property type="entry name" value="RecF/RecN/SMC_N"/>
</dbReference>
<dbReference type="InterPro" id="IPR042174">
    <property type="entry name" value="RecF_2"/>
</dbReference>
<dbReference type="NCBIfam" id="TIGR00611">
    <property type="entry name" value="recf"/>
    <property type="match status" value="1"/>
</dbReference>
<dbReference type="PANTHER" id="PTHR32182">
    <property type="entry name" value="DNA REPLICATION AND REPAIR PROTEIN RECF"/>
    <property type="match status" value="1"/>
</dbReference>
<dbReference type="PANTHER" id="PTHR32182:SF0">
    <property type="entry name" value="DNA REPLICATION AND REPAIR PROTEIN RECF"/>
    <property type="match status" value="1"/>
</dbReference>
<dbReference type="Pfam" id="PF02463">
    <property type="entry name" value="SMC_N"/>
    <property type="match status" value="1"/>
</dbReference>
<dbReference type="SUPFAM" id="SSF52540">
    <property type="entry name" value="P-loop containing nucleoside triphosphate hydrolases"/>
    <property type="match status" value="1"/>
</dbReference>
<dbReference type="PROSITE" id="PS00617">
    <property type="entry name" value="RECF_1"/>
    <property type="match status" value="1"/>
</dbReference>
<dbReference type="PROSITE" id="PS00618">
    <property type="entry name" value="RECF_2"/>
    <property type="match status" value="1"/>
</dbReference>
<protein>
    <recommendedName>
        <fullName evidence="1">DNA replication and repair protein RecF</fullName>
    </recommendedName>
</protein>
<gene>
    <name evidence="1" type="primary">recF</name>
    <name type="ordered locus">SE_0003</name>
</gene>
<accession>Q8CQK5</accession>
<organism>
    <name type="scientific">Staphylococcus epidermidis (strain ATCC 12228 / FDA PCI 1200)</name>
    <dbReference type="NCBI Taxonomy" id="176280"/>
    <lineage>
        <taxon>Bacteria</taxon>
        <taxon>Bacillati</taxon>
        <taxon>Bacillota</taxon>
        <taxon>Bacilli</taxon>
        <taxon>Bacillales</taxon>
        <taxon>Staphylococcaceae</taxon>
        <taxon>Staphylococcus</taxon>
    </lineage>
</organism>